<name>STE20_ASPFU</name>
<gene>
    <name type="primary">ste20</name>
    <name type="ORF">AFUA_2G04680</name>
</gene>
<accession>Q4WHP3</accession>
<feature type="chain" id="PRO_0000237626" description="Serine/threonine-protein kinase ste20">
    <location>
        <begin position="1"/>
        <end position="815"/>
    </location>
</feature>
<feature type="domain" description="CRIB" evidence="2">
    <location>
        <begin position="223"/>
        <end position="236"/>
    </location>
</feature>
<feature type="domain" description="Protein kinase" evidence="3">
    <location>
        <begin position="534"/>
        <end position="785"/>
    </location>
</feature>
<feature type="region of interest" description="Disordered" evidence="5">
    <location>
        <begin position="1"/>
        <end position="160"/>
    </location>
</feature>
<feature type="region of interest" description="Disordered" evidence="5">
    <location>
        <begin position="173"/>
        <end position="200"/>
    </location>
</feature>
<feature type="region of interest" description="Disordered" evidence="5">
    <location>
        <begin position="300"/>
        <end position="513"/>
    </location>
</feature>
<feature type="compositionally biased region" description="Polar residues" evidence="5">
    <location>
        <begin position="24"/>
        <end position="38"/>
    </location>
</feature>
<feature type="compositionally biased region" description="Low complexity" evidence="5">
    <location>
        <begin position="68"/>
        <end position="82"/>
    </location>
</feature>
<feature type="compositionally biased region" description="Polar residues" evidence="5">
    <location>
        <begin position="89"/>
        <end position="114"/>
    </location>
</feature>
<feature type="compositionally biased region" description="Polar residues" evidence="5">
    <location>
        <begin position="148"/>
        <end position="160"/>
    </location>
</feature>
<feature type="compositionally biased region" description="Polar residues" evidence="5">
    <location>
        <begin position="173"/>
        <end position="185"/>
    </location>
</feature>
<feature type="compositionally biased region" description="Polar residues" evidence="5">
    <location>
        <begin position="302"/>
        <end position="314"/>
    </location>
</feature>
<feature type="compositionally biased region" description="Pro residues" evidence="5">
    <location>
        <begin position="374"/>
        <end position="383"/>
    </location>
</feature>
<feature type="compositionally biased region" description="Low complexity" evidence="5">
    <location>
        <begin position="394"/>
        <end position="407"/>
    </location>
</feature>
<feature type="compositionally biased region" description="Polar residues" evidence="5">
    <location>
        <begin position="411"/>
        <end position="424"/>
    </location>
</feature>
<feature type="compositionally biased region" description="Low complexity" evidence="5">
    <location>
        <begin position="429"/>
        <end position="455"/>
    </location>
</feature>
<feature type="compositionally biased region" description="Polar residues" evidence="5">
    <location>
        <begin position="474"/>
        <end position="493"/>
    </location>
</feature>
<feature type="compositionally biased region" description="Low complexity" evidence="5">
    <location>
        <begin position="494"/>
        <end position="504"/>
    </location>
</feature>
<feature type="active site" description="Proton acceptor" evidence="3 4">
    <location>
        <position position="653"/>
    </location>
</feature>
<feature type="binding site" evidence="3">
    <location>
        <begin position="540"/>
        <end position="548"/>
    </location>
    <ligand>
        <name>ATP</name>
        <dbReference type="ChEBI" id="CHEBI:30616"/>
    </ligand>
</feature>
<feature type="binding site" evidence="3">
    <location>
        <position position="563"/>
    </location>
    <ligand>
        <name>ATP</name>
        <dbReference type="ChEBI" id="CHEBI:30616"/>
    </ligand>
</feature>
<sequence length="815" mass="89671">MSNDGFSSLKFRRTSSKLQKDPPSVSSRILRSQQSNTSLKRHPSAPVHPRSSVTGSREHSRTRSNAYGSSSSSLEQHSGGPSPVLAGGDSNNSFSSKSRPGRFSFNTDPSSDELTGSPFDSRGMLSALEENTAESEKSPPPQPPTLRSYHTSPDSRGLRQSASFTALQNRMDTFTQKSENDQSTNTKRHSDEANGTKVFGRSKKSSFSSFVNSMLGSPRGIKISAPENPVHVTHVGYDNQTGQFTGLPKEWQRLLQENGISKKEQEEHPQTMVDIMRFYEKNARGDDEVWHKFDHAYAHHQPTANTPGSQRNSPPTSPRFPQNHEGSFENPRAPPPIPRGAPAATQAMSPPIGGLVPSRAPPKPPAPANMIPARPAPQPPVARPPQDAYANQFSTPPISESEPLPSEAQRSRSNSKTNGAQPQWAQPGAIASPAQYQQQQEQAMAAAQQAIVQNQLERSRSQRQQQSRGPEPKQPTQMGHSQHANDHTTALQSPQKAQPVPAARPRQRARQSNAVDVRARLLAICTPGDPTKLYYNLNKIGQGASGGVYTAYQHGTNNCVAIKQMNLDLQPKKELIINEILVMKDSKHKNIVNFLDSYLHGLDLWVVMEYMEGGSLTDVVTFNIMTEGQIAAVCRETLNGLQHLHSKGVIHRDIKSDNILLSLDGNIKLTDFGFCAQINDSQNKRNTMVGTPYWMAPEVVTRKEYGRKVDIWSLGIMAIEMIEGEPPYLTESPLRALYLIATNGTPTIKDEHNLSPVFRDFLHLALKVDPEKRASAHDLLMHPFMSLCSPLTHLAPLVKAARLSRAQEKAQKGGA</sequence>
<comment type="function">
    <text evidence="1">MAP4K component of the MAPK pathway required for the mating pheromone response and the regulation of cell polarity and cell cycle.</text>
</comment>
<comment type="catalytic activity">
    <reaction>
        <text>L-seryl-[protein] + ATP = O-phospho-L-seryl-[protein] + ADP + H(+)</text>
        <dbReference type="Rhea" id="RHEA:17989"/>
        <dbReference type="Rhea" id="RHEA-COMP:9863"/>
        <dbReference type="Rhea" id="RHEA-COMP:11604"/>
        <dbReference type="ChEBI" id="CHEBI:15378"/>
        <dbReference type="ChEBI" id="CHEBI:29999"/>
        <dbReference type="ChEBI" id="CHEBI:30616"/>
        <dbReference type="ChEBI" id="CHEBI:83421"/>
        <dbReference type="ChEBI" id="CHEBI:456216"/>
        <dbReference type="EC" id="2.7.11.1"/>
    </reaction>
</comment>
<comment type="catalytic activity">
    <reaction>
        <text>L-threonyl-[protein] + ATP = O-phospho-L-threonyl-[protein] + ADP + H(+)</text>
        <dbReference type="Rhea" id="RHEA:46608"/>
        <dbReference type="Rhea" id="RHEA-COMP:11060"/>
        <dbReference type="Rhea" id="RHEA-COMP:11605"/>
        <dbReference type="ChEBI" id="CHEBI:15378"/>
        <dbReference type="ChEBI" id="CHEBI:30013"/>
        <dbReference type="ChEBI" id="CHEBI:30616"/>
        <dbReference type="ChEBI" id="CHEBI:61977"/>
        <dbReference type="ChEBI" id="CHEBI:456216"/>
        <dbReference type="EC" id="2.7.11.1"/>
    </reaction>
</comment>
<comment type="subcellular location">
    <subcellularLocation>
        <location evidence="1">Cytoplasm</location>
    </subcellularLocation>
    <subcellularLocation>
        <location evidence="1">Nucleus</location>
    </subcellularLocation>
</comment>
<comment type="similarity">
    <text evidence="6">Belongs to the protein kinase superfamily. STE Ser/Thr protein kinase family. STE20 subfamily.</text>
</comment>
<reference key="1">
    <citation type="journal article" date="2005" name="Nature">
        <title>Genomic sequence of the pathogenic and allergenic filamentous fungus Aspergillus fumigatus.</title>
        <authorList>
            <person name="Nierman W.C."/>
            <person name="Pain A."/>
            <person name="Anderson M.J."/>
            <person name="Wortman J.R."/>
            <person name="Kim H.S."/>
            <person name="Arroyo J."/>
            <person name="Berriman M."/>
            <person name="Abe K."/>
            <person name="Archer D.B."/>
            <person name="Bermejo C."/>
            <person name="Bennett J.W."/>
            <person name="Bowyer P."/>
            <person name="Chen D."/>
            <person name="Collins M."/>
            <person name="Coulsen R."/>
            <person name="Davies R."/>
            <person name="Dyer P.S."/>
            <person name="Farman M.L."/>
            <person name="Fedorova N."/>
            <person name="Fedorova N.D."/>
            <person name="Feldblyum T.V."/>
            <person name="Fischer R."/>
            <person name="Fosker N."/>
            <person name="Fraser A."/>
            <person name="Garcia J.L."/>
            <person name="Garcia M.J."/>
            <person name="Goble A."/>
            <person name="Goldman G.H."/>
            <person name="Gomi K."/>
            <person name="Griffith-Jones S."/>
            <person name="Gwilliam R."/>
            <person name="Haas B.J."/>
            <person name="Haas H."/>
            <person name="Harris D.E."/>
            <person name="Horiuchi H."/>
            <person name="Huang J."/>
            <person name="Humphray S."/>
            <person name="Jimenez J."/>
            <person name="Keller N."/>
            <person name="Khouri H."/>
            <person name="Kitamoto K."/>
            <person name="Kobayashi T."/>
            <person name="Konzack S."/>
            <person name="Kulkarni R."/>
            <person name="Kumagai T."/>
            <person name="Lafton A."/>
            <person name="Latge J.-P."/>
            <person name="Li W."/>
            <person name="Lord A."/>
            <person name="Lu C."/>
            <person name="Majoros W.H."/>
            <person name="May G.S."/>
            <person name="Miller B.L."/>
            <person name="Mohamoud Y."/>
            <person name="Molina M."/>
            <person name="Monod M."/>
            <person name="Mouyna I."/>
            <person name="Mulligan S."/>
            <person name="Murphy L.D."/>
            <person name="O'Neil S."/>
            <person name="Paulsen I."/>
            <person name="Penalva M.A."/>
            <person name="Pertea M."/>
            <person name="Price C."/>
            <person name="Pritchard B.L."/>
            <person name="Quail M.A."/>
            <person name="Rabbinowitsch E."/>
            <person name="Rawlins N."/>
            <person name="Rajandream M.A."/>
            <person name="Reichard U."/>
            <person name="Renauld H."/>
            <person name="Robson G.D."/>
            <person name="Rodriguez de Cordoba S."/>
            <person name="Rodriguez-Pena J.M."/>
            <person name="Ronning C.M."/>
            <person name="Rutter S."/>
            <person name="Salzberg S.L."/>
            <person name="Sanchez M."/>
            <person name="Sanchez-Ferrero J.C."/>
            <person name="Saunders D."/>
            <person name="Seeger K."/>
            <person name="Squares R."/>
            <person name="Squares S."/>
            <person name="Takeuchi M."/>
            <person name="Tekaia F."/>
            <person name="Turner G."/>
            <person name="Vazquez de Aldana C.R."/>
            <person name="Weidman J."/>
            <person name="White O."/>
            <person name="Woodward J.R."/>
            <person name="Yu J.-H."/>
            <person name="Fraser C.M."/>
            <person name="Galagan J.E."/>
            <person name="Asai K."/>
            <person name="Machida M."/>
            <person name="Hall N."/>
            <person name="Barrell B.G."/>
            <person name="Denning D.W."/>
        </authorList>
    </citation>
    <scope>NUCLEOTIDE SEQUENCE [LARGE SCALE GENOMIC DNA]</scope>
    <source>
        <strain>ATCC MYA-4609 / CBS 101355 / FGSC A1100 / Af293</strain>
    </source>
</reference>
<organism>
    <name type="scientific">Aspergillus fumigatus (strain ATCC MYA-4609 / CBS 101355 / FGSC A1100 / Af293)</name>
    <name type="common">Neosartorya fumigata</name>
    <dbReference type="NCBI Taxonomy" id="330879"/>
    <lineage>
        <taxon>Eukaryota</taxon>
        <taxon>Fungi</taxon>
        <taxon>Dikarya</taxon>
        <taxon>Ascomycota</taxon>
        <taxon>Pezizomycotina</taxon>
        <taxon>Eurotiomycetes</taxon>
        <taxon>Eurotiomycetidae</taxon>
        <taxon>Eurotiales</taxon>
        <taxon>Aspergillaceae</taxon>
        <taxon>Aspergillus</taxon>
        <taxon>Aspergillus subgen. Fumigati</taxon>
    </lineage>
</organism>
<protein>
    <recommendedName>
        <fullName>Serine/threonine-protein kinase ste20</fullName>
        <ecNumber>2.7.11.1</ecNumber>
    </recommendedName>
</protein>
<keyword id="KW-0067">ATP-binding</keyword>
<keyword id="KW-0963">Cytoplasm</keyword>
<keyword id="KW-0418">Kinase</keyword>
<keyword id="KW-0547">Nucleotide-binding</keyword>
<keyword id="KW-0539">Nucleus</keyword>
<keyword id="KW-0589">Pheromone response</keyword>
<keyword id="KW-1185">Reference proteome</keyword>
<keyword id="KW-0723">Serine/threonine-protein kinase</keyword>
<keyword id="KW-0808">Transferase</keyword>
<dbReference type="EC" id="2.7.11.1"/>
<dbReference type="EMBL" id="AAHF01000008">
    <property type="protein sequence ID" value="EAL87562.2"/>
    <property type="molecule type" value="Genomic_DNA"/>
</dbReference>
<dbReference type="RefSeq" id="XP_749600.2">
    <property type="nucleotide sequence ID" value="XM_744507.2"/>
</dbReference>
<dbReference type="SMR" id="Q4WHP3"/>
<dbReference type="FunCoup" id="Q4WHP3">
    <property type="interactions" value="375"/>
</dbReference>
<dbReference type="STRING" id="330879.Q4WHP3"/>
<dbReference type="EnsemblFungi" id="EAL87562">
    <property type="protein sequence ID" value="EAL87562"/>
    <property type="gene ID" value="AFUA_2G04680"/>
</dbReference>
<dbReference type="GeneID" id="3506682"/>
<dbReference type="KEGG" id="afm:AFUA_2G04680"/>
<dbReference type="VEuPathDB" id="FungiDB:Afu2g04680"/>
<dbReference type="eggNOG" id="KOG0578">
    <property type="taxonomic scope" value="Eukaryota"/>
</dbReference>
<dbReference type="HOGENOM" id="CLU_000288_26_1_1"/>
<dbReference type="InParanoid" id="Q4WHP3"/>
<dbReference type="OMA" id="MVDIMKF"/>
<dbReference type="OrthoDB" id="248923at2759"/>
<dbReference type="PHI-base" id="PHI:9261"/>
<dbReference type="Proteomes" id="UP000002530">
    <property type="component" value="Chromosome 2"/>
</dbReference>
<dbReference type="GO" id="GO:0005737">
    <property type="term" value="C:cytoplasm"/>
    <property type="evidence" value="ECO:0007669"/>
    <property type="project" value="UniProtKB-SubCell"/>
</dbReference>
<dbReference type="GO" id="GO:0000131">
    <property type="term" value="C:incipient cellular bud site"/>
    <property type="evidence" value="ECO:0007669"/>
    <property type="project" value="EnsemblFungi"/>
</dbReference>
<dbReference type="GO" id="GO:0043332">
    <property type="term" value="C:mating projection tip"/>
    <property type="evidence" value="ECO:0007669"/>
    <property type="project" value="EnsemblFungi"/>
</dbReference>
<dbReference type="GO" id="GO:0005634">
    <property type="term" value="C:nucleus"/>
    <property type="evidence" value="ECO:0007669"/>
    <property type="project" value="UniProtKB-SubCell"/>
</dbReference>
<dbReference type="GO" id="GO:0005524">
    <property type="term" value="F:ATP binding"/>
    <property type="evidence" value="ECO:0007669"/>
    <property type="project" value="UniProtKB-KW"/>
</dbReference>
<dbReference type="GO" id="GO:0044025">
    <property type="term" value="F:histone H2BS14 kinase activity"/>
    <property type="evidence" value="ECO:0007669"/>
    <property type="project" value="EnsemblFungi"/>
</dbReference>
<dbReference type="GO" id="GO:0008349">
    <property type="term" value="F:MAP kinase kinase kinase kinase activity"/>
    <property type="evidence" value="ECO:0007669"/>
    <property type="project" value="EnsemblFungi"/>
</dbReference>
<dbReference type="GO" id="GO:0106310">
    <property type="term" value="F:protein serine kinase activity"/>
    <property type="evidence" value="ECO:0007669"/>
    <property type="project" value="RHEA"/>
</dbReference>
<dbReference type="GO" id="GO:0007121">
    <property type="term" value="P:bipolar cellular bud site selection"/>
    <property type="evidence" value="ECO:0007669"/>
    <property type="project" value="EnsemblFungi"/>
</dbReference>
<dbReference type="GO" id="GO:0007118">
    <property type="term" value="P:budding cell apical bud growth"/>
    <property type="evidence" value="ECO:0007669"/>
    <property type="project" value="EnsemblFungi"/>
</dbReference>
<dbReference type="GO" id="GO:0070301">
    <property type="term" value="P:cellular response to hydrogen peroxide"/>
    <property type="evidence" value="ECO:0007669"/>
    <property type="project" value="EnsemblFungi"/>
</dbReference>
<dbReference type="GO" id="GO:0001403">
    <property type="term" value="P:invasive growth in response to glucose limitation"/>
    <property type="evidence" value="ECO:0007669"/>
    <property type="project" value="EnsemblFungi"/>
</dbReference>
<dbReference type="GO" id="GO:0010629">
    <property type="term" value="P:negative regulation of gene expression"/>
    <property type="evidence" value="ECO:0007669"/>
    <property type="project" value="EnsemblFungi"/>
</dbReference>
<dbReference type="GO" id="GO:2000910">
    <property type="term" value="P:negative regulation of sterol import"/>
    <property type="evidence" value="ECO:0007669"/>
    <property type="project" value="EnsemblFungi"/>
</dbReference>
<dbReference type="GO" id="GO:0000122">
    <property type="term" value="P:negative regulation of transcription by RNA polymerase II"/>
    <property type="evidence" value="ECO:0007669"/>
    <property type="project" value="EnsemblFungi"/>
</dbReference>
<dbReference type="GO" id="GO:0007232">
    <property type="term" value="P:osmosensory signaling pathway via Sho1 osmosensor"/>
    <property type="evidence" value="ECO:0007669"/>
    <property type="project" value="EnsemblFungi"/>
</dbReference>
<dbReference type="GO" id="GO:0000750">
    <property type="term" value="P:pheromone-dependent signal transduction involved in conjugation with cellular fusion"/>
    <property type="evidence" value="ECO:0007669"/>
    <property type="project" value="EnsemblFungi"/>
</dbReference>
<dbReference type="GO" id="GO:0043065">
    <property type="term" value="P:positive regulation of apoptotic process"/>
    <property type="evidence" value="ECO:0007669"/>
    <property type="project" value="EnsemblFungi"/>
</dbReference>
<dbReference type="GO" id="GO:0007124">
    <property type="term" value="P:pseudohyphal growth"/>
    <property type="evidence" value="ECO:0007669"/>
    <property type="project" value="EnsemblFungi"/>
</dbReference>
<dbReference type="GO" id="GO:0007096">
    <property type="term" value="P:regulation of exit from mitosis"/>
    <property type="evidence" value="ECO:0007669"/>
    <property type="project" value="EnsemblFungi"/>
</dbReference>
<dbReference type="GO" id="GO:0001402">
    <property type="term" value="P:signal transduction involved in filamentous growth"/>
    <property type="evidence" value="ECO:0007669"/>
    <property type="project" value="EnsemblFungi"/>
</dbReference>
<dbReference type="GO" id="GO:0035376">
    <property type="term" value="P:sterol import"/>
    <property type="evidence" value="ECO:0007669"/>
    <property type="project" value="EnsemblFungi"/>
</dbReference>
<dbReference type="GO" id="GO:0034063">
    <property type="term" value="P:stress granule assembly"/>
    <property type="evidence" value="ECO:0007669"/>
    <property type="project" value="EnsemblFungi"/>
</dbReference>
<dbReference type="GO" id="GO:0000011">
    <property type="term" value="P:vacuole inheritance"/>
    <property type="evidence" value="ECO:0007669"/>
    <property type="project" value="EnsemblFungi"/>
</dbReference>
<dbReference type="CDD" id="cd01093">
    <property type="entry name" value="CRIB_PAK_like"/>
    <property type="match status" value="1"/>
</dbReference>
<dbReference type="CDD" id="cd06614">
    <property type="entry name" value="STKc_PAK"/>
    <property type="match status" value="1"/>
</dbReference>
<dbReference type="FunFam" id="1.10.510.10:FF:000011">
    <property type="entry name" value="Non-specific serine/threonine protein kinase"/>
    <property type="match status" value="1"/>
</dbReference>
<dbReference type="FunFam" id="3.30.200.20:FF:000385">
    <property type="entry name" value="Non-specific serine/threonine protein kinase"/>
    <property type="match status" value="1"/>
</dbReference>
<dbReference type="FunFam" id="3.90.810.10:FF:000007">
    <property type="entry name" value="Non-specific serine/threonine protein kinase"/>
    <property type="match status" value="1"/>
</dbReference>
<dbReference type="Gene3D" id="3.90.810.10">
    <property type="entry name" value="CRIB domain"/>
    <property type="match status" value="1"/>
</dbReference>
<dbReference type="Gene3D" id="3.30.200.20">
    <property type="entry name" value="Phosphorylase Kinase, domain 1"/>
    <property type="match status" value="1"/>
</dbReference>
<dbReference type="Gene3D" id="1.10.510.10">
    <property type="entry name" value="Transferase(Phosphotransferase) domain 1"/>
    <property type="match status" value="1"/>
</dbReference>
<dbReference type="InterPro" id="IPR000095">
    <property type="entry name" value="CRIB_dom"/>
</dbReference>
<dbReference type="InterPro" id="IPR036936">
    <property type="entry name" value="CRIB_dom_sf"/>
</dbReference>
<dbReference type="InterPro" id="IPR011009">
    <property type="entry name" value="Kinase-like_dom_sf"/>
</dbReference>
<dbReference type="InterPro" id="IPR051931">
    <property type="entry name" value="PAK3-like"/>
</dbReference>
<dbReference type="InterPro" id="IPR033923">
    <property type="entry name" value="PAK_BD"/>
</dbReference>
<dbReference type="InterPro" id="IPR000719">
    <property type="entry name" value="Prot_kinase_dom"/>
</dbReference>
<dbReference type="InterPro" id="IPR017441">
    <property type="entry name" value="Protein_kinase_ATP_BS"/>
</dbReference>
<dbReference type="InterPro" id="IPR008271">
    <property type="entry name" value="Ser/Thr_kinase_AS"/>
</dbReference>
<dbReference type="PANTHER" id="PTHR45832">
    <property type="entry name" value="SERINE/THREONINE-PROTEIN KINASE SAMKA-RELATED-RELATED"/>
    <property type="match status" value="1"/>
</dbReference>
<dbReference type="PANTHER" id="PTHR45832:SF22">
    <property type="entry name" value="SERINE_THREONINE-PROTEIN KINASE SAMKA-RELATED"/>
    <property type="match status" value="1"/>
</dbReference>
<dbReference type="Pfam" id="PF00786">
    <property type="entry name" value="PBD"/>
    <property type="match status" value="1"/>
</dbReference>
<dbReference type="Pfam" id="PF00069">
    <property type="entry name" value="Pkinase"/>
    <property type="match status" value="1"/>
</dbReference>
<dbReference type="SMART" id="SM00285">
    <property type="entry name" value="PBD"/>
    <property type="match status" value="1"/>
</dbReference>
<dbReference type="SMART" id="SM00220">
    <property type="entry name" value="S_TKc"/>
    <property type="match status" value="1"/>
</dbReference>
<dbReference type="SUPFAM" id="SSF56112">
    <property type="entry name" value="Protein kinase-like (PK-like)"/>
    <property type="match status" value="1"/>
</dbReference>
<dbReference type="PROSITE" id="PS50108">
    <property type="entry name" value="CRIB"/>
    <property type="match status" value="1"/>
</dbReference>
<dbReference type="PROSITE" id="PS00107">
    <property type="entry name" value="PROTEIN_KINASE_ATP"/>
    <property type="match status" value="1"/>
</dbReference>
<dbReference type="PROSITE" id="PS50011">
    <property type="entry name" value="PROTEIN_KINASE_DOM"/>
    <property type="match status" value="1"/>
</dbReference>
<dbReference type="PROSITE" id="PS00108">
    <property type="entry name" value="PROTEIN_KINASE_ST"/>
    <property type="match status" value="1"/>
</dbReference>
<evidence type="ECO:0000250" key="1"/>
<evidence type="ECO:0000255" key="2">
    <source>
        <dbReference type="PROSITE-ProRule" id="PRU00057"/>
    </source>
</evidence>
<evidence type="ECO:0000255" key="3">
    <source>
        <dbReference type="PROSITE-ProRule" id="PRU00159"/>
    </source>
</evidence>
<evidence type="ECO:0000255" key="4">
    <source>
        <dbReference type="PROSITE-ProRule" id="PRU10027"/>
    </source>
</evidence>
<evidence type="ECO:0000256" key="5">
    <source>
        <dbReference type="SAM" id="MobiDB-lite"/>
    </source>
</evidence>
<evidence type="ECO:0000305" key="6"/>
<proteinExistence type="inferred from homology"/>